<protein>
    <recommendedName>
        <fullName evidence="2">Small ribosomal subunit protein uS8</fullName>
    </recommendedName>
    <alternativeName>
        <fullName evidence="3">30S ribosomal protein S8</fullName>
    </alternativeName>
</protein>
<dbReference type="EMBL" id="BX571874">
    <property type="protein sequence ID" value="CAE17084.1"/>
    <property type="molecule type" value="Genomic_DNA"/>
</dbReference>
<dbReference type="RefSeq" id="WP_011148781.1">
    <property type="nucleotide sequence ID" value="NC_005126.1"/>
</dbReference>
<dbReference type="SMR" id="Q7MYG5"/>
<dbReference type="STRING" id="243265.plu4712"/>
<dbReference type="GeneID" id="88808144"/>
<dbReference type="KEGG" id="plu:plu4712"/>
<dbReference type="eggNOG" id="COG0096">
    <property type="taxonomic scope" value="Bacteria"/>
</dbReference>
<dbReference type="HOGENOM" id="CLU_098428_0_0_6"/>
<dbReference type="OrthoDB" id="9802617at2"/>
<dbReference type="Proteomes" id="UP000002514">
    <property type="component" value="Chromosome"/>
</dbReference>
<dbReference type="GO" id="GO:1990904">
    <property type="term" value="C:ribonucleoprotein complex"/>
    <property type="evidence" value="ECO:0007669"/>
    <property type="project" value="UniProtKB-KW"/>
</dbReference>
<dbReference type="GO" id="GO:0005840">
    <property type="term" value="C:ribosome"/>
    <property type="evidence" value="ECO:0007669"/>
    <property type="project" value="UniProtKB-KW"/>
</dbReference>
<dbReference type="GO" id="GO:0019843">
    <property type="term" value="F:rRNA binding"/>
    <property type="evidence" value="ECO:0007669"/>
    <property type="project" value="UniProtKB-UniRule"/>
</dbReference>
<dbReference type="GO" id="GO:0003735">
    <property type="term" value="F:structural constituent of ribosome"/>
    <property type="evidence" value="ECO:0007669"/>
    <property type="project" value="InterPro"/>
</dbReference>
<dbReference type="GO" id="GO:0006412">
    <property type="term" value="P:translation"/>
    <property type="evidence" value="ECO:0007669"/>
    <property type="project" value="UniProtKB-UniRule"/>
</dbReference>
<dbReference type="FunFam" id="3.30.1370.30:FF:000003">
    <property type="entry name" value="30S ribosomal protein S8"/>
    <property type="match status" value="1"/>
</dbReference>
<dbReference type="FunFam" id="3.30.1490.10:FF:000001">
    <property type="entry name" value="30S ribosomal protein S8"/>
    <property type="match status" value="1"/>
</dbReference>
<dbReference type="Gene3D" id="3.30.1370.30">
    <property type="match status" value="1"/>
</dbReference>
<dbReference type="Gene3D" id="3.30.1490.10">
    <property type="match status" value="1"/>
</dbReference>
<dbReference type="HAMAP" id="MF_01302_B">
    <property type="entry name" value="Ribosomal_uS8_B"/>
    <property type="match status" value="1"/>
</dbReference>
<dbReference type="InterPro" id="IPR000630">
    <property type="entry name" value="Ribosomal_uS8"/>
</dbReference>
<dbReference type="InterPro" id="IPR047863">
    <property type="entry name" value="Ribosomal_uS8_CS"/>
</dbReference>
<dbReference type="InterPro" id="IPR035987">
    <property type="entry name" value="Ribosomal_uS8_sf"/>
</dbReference>
<dbReference type="NCBIfam" id="NF001109">
    <property type="entry name" value="PRK00136.1"/>
    <property type="match status" value="1"/>
</dbReference>
<dbReference type="PANTHER" id="PTHR11758">
    <property type="entry name" value="40S RIBOSOMAL PROTEIN S15A"/>
    <property type="match status" value="1"/>
</dbReference>
<dbReference type="Pfam" id="PF00410">
    <property type="entry name" value="Ribosomal_S8"/>
    <property type="match status" value="1"/>
</dbReference>
<dbReference type="SUPFAM" id="SSF56047">
    <property type="entry name" value="Ribosomal protein S8"/>
    <property type="match status" value="1"/>
</dbReference>
<dbReference type="PROSITE" id="PS00053">
    <property type="entry name" value="RIBOSOMAL_S8"/>
    <property type="match status" value="1"/>
</dbReference>
<name>RS8_PHOLL</name>
<organism>
    <name type="scientific">Photorhabdus laumondii subsp. laumondii (strain DSM 15139 / CIP 105565 / TT01)</name>
    <name type="common">Photorhabdus luminescens subsp. laumondii</name>
    <dbReference type="NCBI Taxonomy" id="243265"/>
    <lineage>
        <taxon>Bacteria</taxon>
        <taxon>Pseudomonadati</taxon>
        <taxon>Pseudomonadota</taxon>
        <taxon>Gammaproteobacteria</taxon>
        <taxon>Enterobacterales</taxon>
        <taxon>Morganellaceae</taxon>
        <taxon>Photorhabdus</taxon>
    </lineage>
</organism>
<comment type="function">
    <text evidence="2">One of the primary rRNA binding proteins, it binds directly to 16S rRNA central domain where it helps coordinate assembly of the platform of the 30S subunit.</text>
</comment>
<comment type="subunit">
    <text evidence="2">Part of the 30S ribosomal subunit. Contacts proteins S5 and S12.</text>
</comment>
<comment type="similarity">
    <text evidence="2">Belongs to the universal ribosomal protein uS8 family.</text>
</comment>
<evidence type="ECO:0000250" key="1"/>
<evidence type="ECO:0000255" key="2">
    <source>
        <dbReference type="HAMAP-Rule" id="MF_01302"/>
    </source>
</evidence>
<evidence type="ECO:0000305" key="3"/>
<proteinExistence type="inferred from homology"/>
<accession>Q7MYG5</accession>
<gene>
    <name evidence="2" type="primary">rpsH</name>
    <name type="ordered locus">plu4712</name>
</gene>
<keyword id="KW-1185">Reference proteome</keyword>
<keyword id="KW-0687">Ribonucleoprotein</keyword>
<keyword id="KW-0689">Ribosomal protein</keyword>
<keyword id="KW-0694">RNA-binding</keyword>
<keyword id="KW-0699">rRNA-binding</keyword>
<reference key="1">
    <citation type="journal article" date="2003" name="Nat. Biotechnol.">
        <title>The genome sequence of the entomopathogenic bacterium Photorhabdus luminescens.</title>
        <authorList>
            <person name="Duchaud E."/>
            <person name="Rusniok C."/>
            <person name="Frangeul L."/>
            <person name="Buchrieser C."/>
            <person name="Givaudan A."/>
            <person name="Taourit S."/>
            <person name="Bocs S."/>
            <person name="Boursaux-Eude C."/>
            <person name="Chandler M."/>
            <person name="Charles J.-F."/>
            <person name="Dassa E."/>
            <person name="Derose R."/>
            <person name="Derzelle S."/>
            <person name="Freyssinet G."/>
            <person name="Gaudriault S."/>
            <person name="Medigue C."/>
            <person name="Lanois A."/>
            <person name="Powell K."/>
            <person name="Siguier P."/>
            <person name="Vincent R."/>
            <person name="Wingate V."/>
            <person name="Zouine M."/>
            <person name="Glaser P."/>
            <person name="Boemare N."/>
            <person name="Danchin A."/>
            <person name="Kunst F."/>
        </authorList>
    </citation>
    <scope>NUCLEOTIDE SEQUENCE [LARGE SCALE GENOMIC DNA]</scope>
    <source>
        <strain>DSM 15139 / CIP 105565 / TT01</strain>
    </source>
</reference>
<sequence>MSMQDPIADMLTRIRNGQAANKVAVTMPSSKLKVAIAKVLKEEGYIEDYKIEGDTKPELELVLKYFQGKAVVESIQRVSRPSLRIYKKKDELPQVMAGLGIAVVSTSKGVMTDRAARQAGLGGEILCYVA</sequence>
<feature type="initiator methionine" description="Removed" evidence="1">
    <location>
        <position position="1"/>
    </location>
</feature>
<feature type="chain" id="PRO_0000126459" description="Small ribosomal subunit protein uS8">
    <location>
        <begin position="2"/>
        <end position="130"/>
    </location>
</feature>